<dbReference type="EMBL" id="CP000726">
    <property type="protein sequence ID" value="ABS34816.1"/>
    <property type="molecule type" value="Genomic_DNA"/>
</dbReference>
<dbReference type="RefSeq" id="WP_011986034.1">
    <property type="nucleotide sequence ID" value="NC_009697.1"/>
</dbReference>
<dbReference type="KEGG" id="cba:CLB_0243"/>
<dbReference type="HOGENOM" id="CLU_018288_2_0_9"/>
<dbReference type="GO" id="GO:0051539">
    <property type="term" value="F:4 iron, 4 sulfur cluster binding"/>
    <property type="evidence" value="ECO:0007669"/>
    <property type="project" value="UniProtKB-KW"/>
</dbReference>
<dbReference type="GO" id="GO:0003824">
    <property type="term" value="F:catalytic activity"/>
    <property type="evidence" value="ECO:0007669"/>
    <property type="project" value="InterPro"/>
</dbReference>
<dbReference type="GO" id="GO:0005506">
    <property type="term" value="F:iron ion binding"/>
    <property type="evidence" value="ECO:0007669"/>
    <property type="project" value="UniProtKB-UniRule"/>
</dbReference>
<dbReference type="Gene3D" id="3.80.30.20">
    <property type="entry name" value="tm_1862 like domain"/>
    <property type="match status" value="1"/>
</dbReference>
<dbReference type="HAMAP" id="MF_01251">
    <property type="entry name" value="UPF0313"/>
    <property type="match status" value="1"/>
</dbReference>
<dbReference type="InterPro" id="IPR006638">
    <property type="entry name" value="Elp3/MiaA/NifB-like_rSAM"/>
</dbReference>
<dbReference type="InterPro" id="IPR007197">
    <property type="entry name" value="rSAM"/>
</dbReference>
<dbReference type="InterPro" id="IPR023404">
    <property type="entry name" value="rSAM_horseshoe"/>
</dbReference>
<dbReference type="InterPro" id="IPR022946">
    <property type="entry name" value="UPF0313"/>
</dbReference>
<dbReference type="InterPro" id="IPR024560">
    <property type="entry name" value="UPF0313_C"/>
</dbReference>
<dbReference type="InterPro" id="IPR013704">
    <property type="entry name" value="UPF0313_N"/>
</dbReference>
<dbReference type="NCBIfam" id="TIGR03904">
    <property type="entry name" value="SAM_YgiQ"/>
    <property type="match status" value="1"/>
</dbReference>
<dbReference type="PANTHER" id="PTHR32331">
    <property type="entry name" value="UPF0313 PROTEIN YGIQ"/>
    <property type="match status" value="1"/>
</dbReference>
<dbReference type="PANTHER" id="PTHR32331:SF0">
    <property type="entry name" value="UPF0313 PROTEIN YGIQ"/>
    <property type="match status" value="1"/>
</dbReference>
<dbReference type="Pfam" id="PF11842">
    <property type="entry name" value="DUF3362"/>
    <property type="match status" value="1"/>
</dbReference>
<dbReference type="Pfam" id="PF04055">
    <property type="entry name" value="Radical_SAM"/>
    <property type="match status" value="1"/>
</dbReference>
<dbReference type="Pfam" id="PF08497">
    <property type="entry name" value="Radical_SAM_N"/>
    <property type="match status" value="1"/>
</dbReference>
<dbReference type="SFLD" id="SFLDG01082">
    <property type="entry name" value="B12-binding_domain_containing"/>
    <property type="match status" value="1"/>
</dbReference>
<dbReference type="SFLD" id="SFLDS00029">
    <property type="entry name" value="Radical_SAM"/>
    <property type="match status" value="1"/>
</dbReference>
<dbReference type="SFLD" id="SFLDG01069">
    <property type="entry name" value="UPF0313"/>
    <property type="match status" value="1"/>
</dbReference>
<dbReference type="SMART" id="SM00729">
    <property type="entry name" value="Elp3"/>
    <property type="match status" value="1"/>
</dbReference>
<dbReference type="SUPFAM" id="SSF102114">
    <property type="entry name" value="Radical SAM enzymes"/>
    <property type="match status" value="1"/>
</dbReference>
<dbReference type="PROSITE" id="PS51918">
    <property type="entry name" value="RADICAL_SAM"/>
    <property type="match status" value="1"/>
</dbReference>
<sequence>MSNIDFLPISKEDLKKRNIDVLDFIIVTGDAYVDHPSFGTAIIGRVLEREGFTVGIIAQPNWNNIEDFKKLGKPKYGFLVNSGNIDSMVNHYTASKKKRHDDFYSPGGKSGYRPDRAVIVYCNKIKEAFKDSPIIIGGIEASLRRFAHYDYWDNSVRRSILEDSSADLLIYGMGEKPIVQVSNLLRYGMKIDSIKNVRGTTYIEKDISSLKDYIEIPSFEEVSTNKKSYAEAYKIQYYEQDSIRGKTLVQKHKERYVVQNPPQPPLSQEEMDEVYALPYARTYHPMYEAEGGIPAIKEVKFSITSHRGCYGSCSFCALTFHQGRVIQNRSQDSILKEANMMTNMKDFKGYIHDVGGPTANFRHRACKVQEKHGTCKNKQCVFPKACKNLIVDHKEYLSLLRKIRKIPNVKKVFIRSGIRFDYLMYDKNDEFFKELCEHHISGQLKVAPEHISDKVLNLMGKPTRNVYDSFVKKYYDINKKIHKNQFLVPYLMSSHPGSDLKAAIELAQYIKKMGYTPEQVQDFYPTPGSLSTTMYYTGINPLTEEKVYIPKDQKEKRMQRALLQFSIHDNYDLVKEALIKAHREDLIGNGPDCLIPYNKPYKKSHKKNNAKNNNNHYNKNNNYNKNKDISKKNKKNSLSKHKKRK</sequence>
<evidence type="ECO:0000255" key="1">
    <source>
        <dbReference type="HAMAP-Rule" id="MF_01251"/>
    </source>
</evidence>
<evidence type="ECO:0000255" key="2">
    <source>
        <dbReference type="PROSITE-ProRule" id="PRU01266"/>
    </source>
</evidence>
<evidence type="ECO:0000256" key="3">
    <source>
        <dbReference type="SAM" id="MobiDB-lite"/>
    </source>
</evidence>
<accession>A7FQL2</accession>
<proteinExistence type="inferred from homology"/>
<comment type="cofactor">
    <cofactor evidence="1">
        <name>[4Fe-4S] cluster</name>
        <dbReference type="ChEBI" id="CHEBI:49883"/>
    </cofactor>
    <text evidence="1">Binds 1 [4Fe-4S] cluster. The cluster is coordinated with 3 cysteines and an exchangeable S-adenosyl-L-methionine.</text>
</comment>
<comment type="similarity">
    <text evidence="1">Belongs to the UPF0313 family.</text>
</comment>
<organism>
    <name type="scientific">Clostridium botulinum (strain ATCC 19397 / Type A)</name>
    <dbReference type="NCBI Taxonomy" id="441770"/>
    <lineage>
        <taxon>Bacteria</taxon>
        <taxon>Bacillati</taxon>
        <taxon>Bacillota</taxon>
        <taxon>Clostridia</taxon>
        <taxon>Eubacteriales</taxon>
        <taxon>Clostridiaceae</taxon>
        <taxon>Clostridium</taxon>
    </lineage>
</organism>
<protein>
    <recommendedName>
        <fullName evidence="1">UPF0313 protein CLB_0243</fullName>
    </recommendedName>
</protein>
<gene>
    <name type="ordered locus">CLB_0243</name>
</gene>
<reference key="1">
    <citation type="journal article" date="2007" name="PLoS ONE">
        <title>Analysis of the neurotoxin complex genes in Clostridium botulinum A1-A4 and B1 strains: BoNT/A3, /Ba4 and /B1 clusters are located within plasmids.</title>
        <authorList>
            <person name="Smith T.J."/>
            <person name="Hill K.K."/>
            <person name="Foley B.T."/>
            <person name="Detter J.C."/>
            <person name="Munk A.C."/>
            <person name="Bruce D.C."/>
            <person name="Doggett N.A."/>
            <person name="Smith L.A."/>
            <person name="Marks J.D."/>
            <person name="Xie G."/>
            <person name="Brettin T.S."/>
        </authorList>
    </citation>
    <scope>NUCLEOTIDE SEQUENCE [LARGE SCALE GENOMIC DNA]</scope>
    <source>
        <strain>ATCC 19397 / Type A</strain>
    </source>
</reference>
<keyword id="KW-0004">4Fe-4S</keyword>
<keyword id="KW-0408">Iron</keyword>
<keyword id="KW-0411">Iron-sulfur</keyword>
<keyword id="KW-0479">Metal-binding</keyword>
<keyword id="KW-0949">S-adenosyl-L-methionine</keyword>
<name>Y243_CLOB1</name>
<feature type="chain" id="PRO_1000067191" description="UPF0313 protein CLB_0243">
    <location>
        <begin position="1"/>
        <end position="645"/>
    </location>
</feature>
<feature type="domain" description="Radical SAM core" evidence="2">
    <location>
        <begin position="295"/>
        <end position="566"/>
    </location>
</feature>
<feature type="region of interest" description="Disordered" evidence="3">
    <location>
        <begin position="598"/>
        <end position="645"/>
    </location>
</feature>
<feature type="compositionally biased region" description="Basic residues" evidence="3">
    <location>
        <begin position="600"/>
        <end position="609"/>
    </location>
</feature>
<feature type="compositionally biased region" description="Low complexity" evidence="3">
    <location>
        <begin position="610"/>
        <end position="624"/>
    </location>
</feature>
<feature type="compositionally biased region" description="Basic residues" evidence="3">
    <location>
        <begin position="632"/>
        <end position="645"/>
    </location>
</feature>
<feature type="binding site" evidence="1">
    <location>
        <position position="309"/>
    </location>
    <ligand>
        <name>[4Fe-4S] cluster</name>
        <dbReference type="ChEBI" id="CHEBI:49883"/>
        <note>4Fe-4S-S-AdoMet</note>
    </ligand>
</feature>
<feature type="binding site" evidence="1">
    <location>
        <position position="313"/>
    </location>
    <ligand>
        <name>[4Fe-4S] cluster</name>
        <dbReference type="ChEBI" id="CHEBI:49883"/>
        <note>4Fe-4S-S-AdoMet</note>
    </ligand>
</feature>
<feature type="binding site" evidence="1">
    <location>
        <position position="316"/>
    </location>
    <ligand>
        <name>[4Fe-4S] cluster</name>
        <dbReference type="ChEBI" id="CHEBI:49883"/>
        <note>4Fe-4S-S-AdoMet</note>
    </ligand>
</feature>